<name>CAPSH_ADE40</name>
<accession>P11819</accession>
<gene>
    <name evidence="1" type="primary">L3</name>
</gene>
<sequence>MATPSMMPQWSYMHIAGQDASEYLSPGLVQFARATDTYFSLGNKFRNPTVAPTHDVTTDRSQRLTLRFVPVDREETAYSYKVRFTLAVGDNRVLDMASTYFDIRGVLDRGPSFKPYSGTAYNSLAPKGAPNPSQWTNQNKTNSFGQAPYIGQKITNQGVQVGSDSNNRDVFADKTYQPEPQVGQTQWNINPMQNAAGRILKQTTPMQPCYGSYARPTNEKGGQAKLVKNDDNQTTTTNVGLNFFTTATETANFSPKVVLYSEDVNLEAPDTHLVFKPDVNGTSAELLLGQQAAPNRPNYIGFRDNFIGLMYYNSTGNMGVLAGQASQLNAVVDLQDRNTELSYQLMLDALGDRSRYFSMWNQAVDSYDPDVRIIENHGVEDELPNYCFPLNGQGISNSYQGVKTDNGTNWSQNNTDVSSNNEISIGNVFAMEINLAANLWRSFLYSNVALYLPDSYKITPDNITLPDNKNTYAYMNGRVAVPSALDTYVNIGARWSPDPMDNVNPFNHHRNAGLRYRSMLLGNGRYVPFHIQVPQKFFAIKNLLLLPGSYTYEWNFRKDVNMILQSSLGNDLRVDGASVRFDSINLYANFFPMAHNTASTLEAMLRNDTNDQSFNDYLCAANMLYPIPANATSVPISIPSRNWAAFRGWSFTRLKTKETPSLGSGFDPYFTYSGSVPYLDGTFYLNHTFKKVSVMFDSSVSWPGNDRLLTPNEFEIKRTVDGEGYNVAQCNMTKDWFLIQMLSHYNIGYQGFHVPESYKDRMYSFFRNFQPMSRQVVDTTTYTEYQNVTLPFQHNNSGFVGYMGPAIREGQAYPANYPYPLIGQTAVPSLTQKKFLCDRTMWRIPFSSNFMSMGALTDLGQNMLYANSAHALDMTFEVDPMDEPTLLYVLFEVFDVVRIHQPHRGVIEAVYLRTPFSAGNATT</sequence>
<organism>
    <name type="scientific">Human adenovirus F serotype 40</name>
    <name type="common">HAdV-40</name>
    <name type="synonym">Human adenovirus 40</name>
    <dbReference type="NCBI Taxonomy" id="28284"/>
    <lineage>
        <taxon>Viruses</taxon>
        <taxon>Varidnaviria</taxon>
        <taxon>Bamfordvirae</taxon>
        <taxon>Preplasmiviricota</taxon>
        <taxon>Tectiliviricetes</taxon>
        <taxon>Rowavirales</taxon>
        <taxon>Adenoviridae</taxon>
        <taxon>Mastadenovirus</taxon>
        <taxon>Human mastadenovirus F</taxon>
    </lineage>
</organism>
<protein>
    <recommendedName>
        <fullName evidence="1">Hexon protein</fullName>
        <shortName evidence="1">CP-H</shortName>
    </recommendedName>
    <alternativeName>
        <fullName evidence="1">Protein II</fullName>
    </alternativeName>
</protein>
<organismHost>
    <name type="scientific">Homo sapiens</name>
    <name type="common">Human</name>
    <dbReference type="NCBI Taxonomy" id="9606"/>
</organismHost>
<comment type="function">
    <text evidence="1">Major capsid protein that self-associates to form 240 hexon trimers, each in the shape of a hexagon, building most of the pseudo T=25 capsid. Assembled into trimeric units with the help of the chaperone shutoff protein. Transported by pre-protein VI to the nucleus where it associates with other structural proteins to form an empty capsid. Might be involved, through its interaction with host dyneins, in the intracellular microtubule-dependent transport of incoming viral capsid to the nucleus.</text>
</comment>
<comment type="subunit">
    <text evidence="1">Homotrimer. Interacts with the capsid vertex protein; this interaction binds the peripentonal hexons to the neighboring penton base. Interacts with the hexon-linking protein; this interaction tethers the hexons surrounding the penton to those situated in the central plate of the facet. Interacts with the hexon-interlacing protein; this interaction lashes the hexons together. Interacts with host dyneins DYNC1LI1 and DYNC1I2; this interaction might be involved in intracellular microtubule-dependent transport of incoming viral capsid. Interacts with the shutoff protein; this interaction allows folding and formation of hexons trimers. Interacts with pre-protein VI; this interaction probably allows nuclear import of hexon trimers and possibly pre-capsid assembly.</text>
</comment>
<comment type="subcellular location">
    <subcellularLocation>
        <location evidence="1">Virion</location>
    </subcellularLocation>
    <subcellularLocation>
        <location evidence="1">Host nucleus</location>
    </subcellularLocation>
    <text evidence="1">Forms the capsid icosahedric shell. Present in 720 copies per virion, assembled in 240 trimers.</text>
</comment>
<comment type="induction">
    <text evidence="1">Expressed in the late phase of the viral replicative cycle.</text>
</comment>
<comment type="miscellaneous">
    <text evidence="1">All late proteins expressed from the major late promoter are produced by alternative splicing and alternative polyadenylation of the same gene giving rise to non-overlapping ORFs. A leader sequence is present in the N-terminus of all these mRNAs and is recognized by the viral shutoff protein to provide expression although conventional translation via ribosome scanning from the cap has been shut off in the host cell.</text>
</comment>
<comment type="similarity">
    <text evidence="1 2">Belongs to the adenoviridae hexon protein family.</text>
</comment>
<proteinExistence type="inferred from homology"/>
<keyword id="KW-0007">Acetylation</keyword>
<keyword id="KW-0167">Capsid protein</keyword>
<keyword id="KW-1176">Cytoplasmic inwards viral transport</keyword>
<keyword id="KW-1048">Host nucleus</keyword>
<keyword id="KW-0945">Host-virus interaction</keyword>
<keyword id="KW-0426">Late protein</keyword>
<keyword id="KW-1177">Microtubular inwards viral transport</keyword>
<keyword id="KW-0597">Phosphoprotein</keyword>
<keyword id="KW-1185">Reference proteome</keyword>
<keyword id="KW-1148">T=25 icosahedral capsid protein</keyword>
<keyword id="KW-0946">Virion</keyword>
<keyword id="KW-1160">Virus entry into host cell</keyword>
<dbReference type="EMBL" id="L19443">
    <property type="protein sequence ID" value="AAC13967.1"/>
    <property type="molecule type" value="Genomic_DNA"/>
</dbReference>
<dbReference type="EMBL" id="X51782">
    <property type="protein sequence ID" value="CAA36077.1"/>
    <property type="molecule type" value="Genomic_DNA"/>
</dbReference>
<dbReference type="EMBL" id="M19540">
    <property type="protein sequence ID" value="AAA52194.1"/>
    <property type="molecule type" value="Genomic_DNA"/>
</dbReference>
<dbReference type="PIR" id="A33611">
    <property type="entry name" value="HXAD40"/>
</dbReference>
<dbReference type="RefSeq" id="NP_040862.1">
    <property type="nucleotide sequence ID" value="NC_001454.1"/>
</dbReference>
<dbReference type="SMR" id="P11819"/>
<dbReference type="DNASU" id="2715932"/>
<dbReference type="GeneID" id="2715932"/>
<dbReference type="KEGG" id="vg:2715932"/>
<dbReference type="Proteomes" id="UP000151954">
    <property type="component" value="Segment"/>
</dbReference>
<dbReference type="GO" id="GO:0043657">
    <property type="term" value="C:host cell"/>
    <property type="evidence" value="ECO:0007669"/>
    <property type="project" value="GOC"/>
</dbReference>
<dbReference type="GO" id="GO:0042025">
    <property type="term" value="C:host cell nucleus"/>
    <property type="evidence" value="ECO:0007669"/>
    <property type="project" value="UniProtKB-SubCell"/>
</dbReference>
<dbReference type="GO" id="GO:0039623">
    <property type="term" value="C:T=25 icosahedral viral capsid"/>
    <property type="evidence" value="ECO:0007669"/>
    <property type="project" value="UniProtKB-UniRule"/>
</dbReference>
<dbReference type="GO" id="GO:0005198">
    <property type="term" value="F:structural molecule activity"/>
    <property type="evidence" value="ECO:0007669"/>
    <property type="project" value="UniProtKB-UniRule"/>
</dbReference>
<dbReference type="GO" id="GO:0075521">
    <property type="term" value="P:microtubule-dependent intracellular transport of viral material towards nucleus"/>
    <property type="evidence" value="ECO:0007669"/>
    <property type="project" value="UniProtKB-UniRule"/>
</dbReference>
<dbReference type="GO" id="GO:0046718">
    <property type="term" value="P:symbiont entry into host cell"/>
    <property type="evidence" value="ECO:0007669"/>
    <property type="project" value="UniProtKB-UniRule"/>
</dbReference>
<dbReference type="FunFam" id="2.70.9.10:FF:000001">
    <property type="entry name" value="Hexon protein"/>
    <property type="match status" value="1"/>
</dbReference>
<dbReference type="Gene3D" id="2.70.9.10">
    <property type="entry name" value="Adenovirus Type 2 Hexon, domain 4"/>
    <property type="match status" value="2"/>
</dbReference>
<dbReference type="Gene3D" id="3.90.39.10">
    <property type="entry name" value="Hexon Major Viral Coat Protein, domain 2"/>
    <property type="match status" value="1"/>
</dbReference>
<dbReference type="Gene3D" id="3.90.249.10">
    <property type="entry name" value="Hexon Major Viral Coat Protein, domain 3"/>
    <property type="match status" value="2"/>
</dbReference>
<dbReference type="HAMAP" id="MF_04051">
    <property type="entry name" value="ADV_CAPSH"/>
    <property type="match status" value="1"/>
</dbReference>
<dbReference type="InterPro" id="IPR016108">
    <property type="entry name" value="Adenovirus_Pll_hexon_C"/>
</dbReference>
<dbReference type="InterPro" id="IPR016107">
    <property type="entry name" value="Adenovirus_Pll_hexon_N"/>
</dbReference>
<dbReference type="InterPro" id="IPR044942">
    <property type="entry name" value="Adenovirus_Pll_hexon_sub2"/>
</dbReference>
<dbReference type="InterPro" id="IPR016110">
    <property type="entry name" value="Adenovirus_Pll_hexon_sub3"/>
</dbReference>
<dbReference type="InterPro" id="IPR037542">
    <property type="entry name" value="ADV_hexon"/>
</dbReference>
<dbReference type="InterPro" id="IPR016112">
    <property type="entry name" value="VP_dsDNA_II"/>
</dbReference>
<dbReference type="Pfam" id="PF01065">
    <property type="entry name" value="Adeno_hexon"/>
    <property type="match status" value="1"/>
</dbReference>
<dbReference type="Pfam" id="PF03678">
    <property type="entry name" value="Adeno_hexon_C"/>
    <property type="match status" value="1"/>
</dbReference>
<dbReference type="SUPFAM" id="SSF49749">
    <property type="entry name" value="Group II dsDNA viruses VP"/>
    <property type="match status" value="2"/>
</dbReference>
<reference key="1">
    <citation type="journal article" date="1993" name="J. Mol. Biol.">
        <title>The DNA sequence of adenovirus type 40.</title>
        <authorList>
            <person name="Davison A.J."/>
            <person name="Telford E.A."/>
            <person name="Watson M.S."/>
            <person name="McBride K."/>
            <person name="Mautner V."/>
        </authorList>
    </citation>
    <scope>NUCLEOTIDE SEQUENCE [LARGE SCALE GENOMIC DNA]</scope>
    <source>
        <strain>Dugan</strain>
    </source>
</reference>
<reference key="2">
    <citation type="journal article" date="1989" name="J. Gen. Virol.">
        <title>The adenovirus type 40 hexon: sequence, predicted structure and relationship to other adenovirus hexons.</title>
        <authorList>
            <person name="Toogood C.I.A."/>
            <person name="Murali R."/>
            <person name="Burnett M."/>
            <person name="Hay R.T."/>
        </authorList>
    </citation>
    <scope>NUCLEOTIDE SEQUENCE [GENOMIC DNA]</scope>
    <source>
        <strain>Dugan</strain>
    </source>
</reference>
<reference key="3">
    <citation type="journal article" date="1988" name="Virology">
        <title>The genes encoding the DNA binding protein and the 23K protease of adenovirus types 40 and 41.</title>
        <authorList>
            <person name="Vos H.L."/>
            <person name="der Lee F.M."/>
            <person name="Reemst A.M.C.B."/>
            <person name="van Loon A.E."/>
            <person name="Sussenbach J.S."/>
        </authorList>
    </citation>
    <scope>NUCLEOTIDE SEQUENCE [GENOMIC DNA] OF 640-923</scope>
</reference>
<feature type="initiator methionine" description="Removed; by host" evidence="1">
    <location>
        <position position="1"/>
    </location>
</feature>
<feature type="chain" id="PRO_0000221824" description="Hexon protein" evidence="1">
    <location>
        <begin position="2"/>
        <end position="923"/>
    </location>
</feature>
<feature type="site" description="Involved in interaction with pre-protein VI" evidence="1">
    <location>
        <position position="748"/>
    </location>
</feature>
<feature type="modified residue" description="N-acetylalanine; by host" evidence="1">
    <location>
        <position position="2"/>
    </location>
</feature>
<feature type="modified residue" description="Phosphotyrosine; by host" evidence="1">
    <location>
        <position position="911"/>
    </location>
</feature>
<feature type="sequence conflict" description="In Ref. 2; CAA36077." evidence="2" ref="2">
    <original>S</original>
    <variation>L</variation>
    <location>
        <position position="163"/>
    </location>
</feature>
<evidence type="ECO:0000255" key="1">
    <source>
        <dbReference type="HAMAP-Rule" id="MF_04051"/>
    </source>
</evidence>
<evidence type="ECO:0000305" key="2"/>